<accession>C3N5U8</accession>
<evidence type="ECO:0000255" key="1">
    <source>
        <dbReference type="HAMAP-Rule" id="MF_01371"/>
    </source>
</evidence>
<evidence type="ECO:0000305" key="2"/>
<keyword id="KW-0687">Ribonucleoprotein</keyword>
<keyword id="KW-0689">Ribosomal protein</keyword>
<organism>
    <name type="scientific">Saccharolobus islandicus (strain M.16.27)</name>
    <name type="common">Sulfolobus islandicus</name>
    <dbReference type="NCBI Taxonomy" id="427318"/>
    <lineage>
        <taxon>Archaea</taxon>
        <taxon>Thermoproteota</taxon>
        <taxon>Thermoprotei</taxon>
        <taxon>Sulfolobales</taxon>
        <taxon>Sulfolobaceae</taxon>
        <taxon>Saccharolobus</taxon>
    </lineage>
</organism>
<gene>
    <name evidence="1" type="primary">rpl30</name>
    <name type="ordered locus">M1627_1491</name>
</gene>
<proteinExistence type="inferred from homology"/>
<feature type="chain" id="PRO_1000215075" description="Large ribosomal subunit protein uL30">
    <location>
        <begin position="1"/>
        <end position="158"/>
    </location>
</feature>
<name>RL30_SACI3</name>
<comment type="subunit">
    <text evidence="1">Part of the 50S ribosomal subunit.</text>
</comment>
<comment type="similarity">
    <text evidence="1">Belongs to the universal ribosomal protein uL30 family.</text>
</comment>
<dbReference type="EMBL" id="CP001401">
    <property type="protein sequence ID" value="ACP55373.1"/>
    <property type="molecule type" value="Genomic_DNA"/>
</dbReference>
<dbReference type="SMR" id="C3N5U8"/>
<dbReference type="KEGG" id="sim:M1627_1491"/>
<dbReference type="HOGENOM" id="CLU_055156_6_0_2"/>
<dbReference type="Proteomes" id="UP000002307">
    <property type="component" value="Chromosome"/>
</dbReference>
<dbReference type="GO" id="GO:0022625">
    <property type="term" value="C:cytosolic large ribosomal subunit"/>
    <property type="evidence" value="ECO:0007669"/>
    <property type="project" value="TreeGrafter"/>
</dbReference>
<dbReference type="GO" id="GO:0003723">
    <property type="term" value="F:RNA binding"/>
    <property type="evidence" value="ECO:0007669"/>
    <property type="project" value="TreeGrafter"/>
</dbReference>
<dbReference type="GO" id="GO:0003735">
    <property type="term" value="F:structural constituent of ribosome"/>
    <property type="evidence" value="ECO:0007669"/>
    <property type="project" value="InterPro"/>
</dbReference>
<dbReference type="GO" id="GO:0000463">
    <property type="term" value="P:maturation of LSU-rRNA from tricistronic rRNA transcript (SSU-rRNA, 5.8S rRNA, LSU-rRNA)"/>
    <property type="evidence" value="ECO:0007669"/>
    <property type="project" value="TreeGrafter"/>
</dbReference>
<dbReference type="GO" id="GO:0006412">
    <property type="term" value="P:translation"/>
    <property type="evidence" value="ECO:0007669"/>
    <property type="project" value="UniProtKB-UniRule"/>
</dbReference>
<dbReference type="CDD" id="cd01657">
    <property type="entry name" value="Ribosomal_L7_archeal_euk"/>
    <property type="match status" value="1"/>
</dbReference>
<dbReference type="Gene3D" id="1.10.15.30">
    <property type="match status" value="1"/>
</dbReference>
<dbReference type="Gene3D" id="3.30.1390.20">
    <property type="entry name" value="Ribosomal protein L30, ferredoxin-like fold domain"/>
    <property type="match status" value="1"/>
</dbReference>
<dbReference type="HAMAP" id="MF_01371_A">
    <property type="entry name" value="Ribosomal_uL30_A"/>
    <property type="match status" value="1"/>
</dbReference>
<dbReference type="InterPro" id="IPR036919">
    <property type="entry name" value="Ribo_uL30_ferredoxin-like_sf"/>
</dbReference>
<dbReference type="InterPro" id="IPR039699">
    <property type="entry name" value="Ribosomal_uL30"/>
</dbReference>
<dbReference type="InterPro" id="IPR005997">
    <property type="entry name" value="Ribosomal_uL30_arc"/>
</dbReference>
<dbReference type="InterPro" id="IPR035808">
    <property type="entry name" value="Ribosomal_uL30_euk_arc"/>
</dbReference>
<dbReference type="InterPro" id="IPR016082">
    <property type="entry name" value="Ribosomal_uL30_ferredoxin-like"/>
</dbReference>
<dbReference type="NCBIfam" id="NF004711">
    <property type="entry name" value="PRK06049.1"/>
    <property type="match status" value="1"/>
</dbReference>
<dbReference type="NCBIfam" id="TIGR01309">
    <property type="entry name" value="uL30_arch"/>
    <property type="match status" value="1"/>
</dbReference>
<dbReference type="PANTHER" id="PTHR11524">
    <property type="entry name" value="60S RIBOSOMAL PROTEIN L7"/>
    <property type="match status" value="1"/>
</dbReference>
<dbReference type="PANTHER" id="PTHR11524:SF16">
    <property type="entry name" value="LARGE RIBOSOMAL SUBUNIT PROTEIN UL30"/>
    <property type="match status" value="1"/>
</dbReference>
<dbReference type="Pfam" id="PF00327">
    <property type="entry name" value="Ribosomal_L30"/>
    <property type="match status" value="1"/>
</dbReference>
<dbReference type="SUPFAM" id="SSF55129">
    <property type="entry name" value="Ribosomal protein L30p/L7e"/>
    <property type="match status" value="1"/>
</dbReference>
<protein>
    <recommendedName>
        <fullName evidence="1">Large ribosomal subunit protein uL30</fullName>
    </recommendedName>
    <alternativeName>
        <fullName evidence="2">50S ribosomal protein L30</fullName>
    </alternativeName>
</protein>
<reference key="1">
    <citation type="journal article" date="2009" name="Proc. Natl. Acad. Sci. U.S.A.">
        <title>Biogeography of the Sulfolobus islandicus pan-genome.</title>
        <authorList>
            <person name="Reno M.L."/>
            <person name="Held N.L."/>
            <person name="Fields C.J."/>
            <person name="Burke P.V."/>
            <person name="Whitaker R.J."/>
        </authorList>
    </citation>
    <scope>NUCLEOTIDE SEQUENCE [LARGE SCALE GENOMIC DNA]</scope>
    <source>
        <strain>M.16.27</strain>
    </source>
</reference>
<sequence>MVELLGIIRIRGWAKAPWYINETLEMLRLRYNFNTMMYPKTSQILGMLNKVSPYVTWGEIDPDTLKLLIIKRLETAKGDKVSDSYVKEVLKIENIDTMVKQLYEGKIYLHKLDQYFKLPIRLHPPKGGFKGSVKRPYKNKGEFGYRGDKINELMRRMM</sequence>